<protein>
    <recommendedName>
        <fullName evidence="5">Large ribosomal subunit protein uL22m</fullName>
    </recommendedName>
    <alternativeName>
        <fullName>54S ribosomal protein L22, mitochondrial</fullName>
    </alternativeName>
</protein>
<comment type="function">
    <text evidence="1">Component of the mitochondrial ribosome (mitoribosome), a dedicated translation machinery responsible for the synthesis of mitochondrial genome-encoded proteins, including at least some of the essential transmembrane subunits of the mitochondrial respiratory chain. The mitoribosomes are attached to the mitochondrial inner membrane and translation products are cotranslationally integrated into the membrane.</text>
</comment>
<comment type="subunit">
    <text evidence="1">Component of the mitochondrial large ribosomal subunit (mt-LSU). Mature yeast 74S mitochondrial ribosomes consist of a small (37S) and a large (54S) subunit. The 37S small subunit contains a 15S ribosomal RNA (15S mt-rRNA) and at least 32 different proteins. The 54S large subunit contains a 21S rRNA (21S mt-rRNA) and at least 45 different proteins. uL22m forms the wall of the exit tunnel.</text>
</comment>
<comment type="subcellular location">
    <subcellularLocation>
        <location evidence="4">Mitochondrion</location>
    </subcellularLocation>
</comment>
<comment type="similarity">
    <text evidence="5">Belongs to the universal ribosomal protein uL22 family.</text>
</comment>
<keyword id="KW-0496">Mitochondrion</keyword>
<keyword id="KW-1185">Reference proteome</keyword>
<keyword id="KW-0687">Ribonucleoprotein</keyword>
<keyword id="KW-0689">Ribosomal protein</keyword>
<keyword id="KW-0809">Transit peptide</keyword>
<dbReference type="EMBL" id="CU329672">
    <property type="protein sequence ID" value="CAA20776.1"/>
    <property type="molecule type" value="Genomic_DNA"/>
</dbReference>
<dbReference type="PIR" id="T41110">
    <property type="entry name" value="T41110"/>
</dbReference>
<dbReference type="RefSeq" id="NP_588410.1">
    <property type="nucleotide sequence ID" value="NM_001023401.2"/>
</dbReference>
<dbReference type="SMR" id="O74464"/>
<dbReference type="BioGRID" id="275516">
    <property type="interactions" value="1"/>
</dbReference>
<dbReference type="ComplexPortal" id="CPX-10323">
    <property type="entry name" value="54S mitochondrial large ribosomal subunit"/>
</dbReference>
<dbReference type="FunCoup" id="O74464">
    <property type="interactions" value="59"/>
</dbReference>
<dbReference type="STRING" id="284812.O74464"/>
<dbReference type="PaxDb" id="4896-SPCC1739.02c.1"/>
<dbReference type="EnsemblFungi" id="SPCC1739.02c.1">
    <property type="protein sequence ID" value="SPCC1739.02c.1:pep"/>
    <property type="gene ID" value="SPCC1739.02c"/>
</dbReference>
<dbReference type="GeneID" id="2538941"/>
<dbReference type="KEGG" id="spo:2538941"/>
<dbReference type="PomBase" id="SPCC1739.02c">
    <property type="gene designation" value="mrpl22"/>
</dbReference>
<dbReference type="VEuPathDB" id="FungiDB:SPCC1739.02c"/>
<dbReference type="eggNOG" id="KOG1711">
    <property type="taxonomic scope" value="Eukaryota"/>
</dbReference>
<dbReference type="HOGENOM" id="CLU_1116304_0_0_1"/>
<dbReference type="InParanoid" id="O74464"/>
<dbReference type="OMA" id="GQFGIMH"/>
<dbReference type="PhylomeDB" id="O74464"/>
<dbReference type="PRO" id="PR:O74464"/>
<dbReference type="Proteomes" id="UP000002485">
    <property type="component" value="Chromosome III"/>
</dbReference>
<dbReference type="GO" id="GO:0005737">
    <property type="term" value="C:cytoplasm"/>
    <property type="evidence" value="ECO:0007005"/>
    <property type="project" value="PomBase"/>
</dbReference>
<dbReference type="GO" id="GO:0005762">
    <property type="term" value="C:mitochondrial large ribosomal subunit"/>
    <property type="evidence" value="ECO:0000318"/>
    <property type="project" value="GO_Central"/>
</dbReference>
<dbReference type="GO" id="GO:0003735">
    <property type="term" value="F:structural constituent of ribosome"/>
    <property type="evidence" value="ECO:0000318"/>
    <property type="project" value="GO_Central"/>
</dbReference>
<dbReference type="GO" id="GO:0032543">
    <property type="term" value="P:mitochondrial translation"/>
    <property type="evidence" value="ECO:0000250"/>
    <property type="project" value="PomBase"/>
</dbReference>
<dbReference type="GO" id="GO:0006412">
    <property type="term" value="P:translation"/>
    <property type="evidence" value="ECO:0000318"/>
    <property type="project" value="GO_Central"/>
</dbReference>
<dbReference type="CDD" id="cd00336">
    <property type="entry name" value="Ribosomal_L22"/>
    <property type="match status" value="1"/>
</dbReference>
<dbReference type="Gene3D" id="3.90.470.10">
    <property type="entry name" value="Ribosomal protein L22/L17"/>
    <property type="match status" value="1"/>
</dbReference>
<dbReference type="InterPro" id="IPR001063">
    <property type="entry name" value="Ribosomal_uL22"/>
</dbReference>
<dbReference type="InterPro" id="IPR047867">
    <property type="entry name" value="Ribosomal_uL22_bac/org-type"/>
</dbReference>
<dbReference type="InterPro" id="IPR036394">
    <property type="entry name" value="Ribosomal_uL22_sf"/>
</dbReference>
<dbReference type="PANTHER" id="PTHR13501">
    <property type="entry name" value="CHLOROPLAST 50S RIBOSOMAL PROTEIN L22-RELATED"/>
    <property type="match status" value="1"/>
</dbReference>
<dbReference type="PANTHER" id="PTHR13501:SF8">
    <property type="entry name" value="LARGE RIBOSOMAL SUBUNIT PROTEIN UL22M"/>
    <property type="match status" value="1"/>
</dbReference>
<dbReference type="Pfam" id="PF00237">
    <property type="entry name" value="Ribosomal_L22"/>
    <property type="match status" value="1"/>
</dbReference>
<dbReference type="SUPFAM" id="SSF54843">
    <property type="entry name" value="Ribosomal protein L22"/>
    <property type="match status" value="1"/>
</dbReference>
<sequence length="249" mass="28904">MKYINQFMKISKGFLVPSSTIGLNSKTYHYKFPLLSFVREFSNGSYLRESAQNPANLGSQKGSDIFSMLANQKDDSNRQQKEERVKERPRSRISFKKQETMDPSYTLQSMVLRSSLKKVGALCRQIAHKPFYHALLQMKMSDKKISKYIATALVSARENAVREAGLDESTLYVDQIWVGKAKYLKKLITMGRGGRAIERSPRVRVTVVLRDERALLRDLQRRQQRLERKKVWTPLPNRPIYLKSNFFTC</sequence>
<evidence type="ECO:0000250" key="1">
    <source>
        <dbReference type="UniProtKB" id="P53881"/>
    </source>
</evidence>
<evidence type="ECO:0000255" key="2"/>
<evidence type="ECO:0000256" key="3">
    <source>
        <dbReference type="SAM" id="MobiDB-lite"/>
    </source>
</evidence>
<evidence type="ECO:0000269" key="4">
    <source>
    </source>
</evidence>
<evidence type="ECO:0000305" key="5"/>
<proteinExistence type="inferred from homology"/>
<reference key="1">
    <citation type="journal article" date="2002" name="Nature">
        <title>The genome sequence of Schizosaccharomyces pombe.</title>
        <authorList>
            <person name="Wood V."/>
            <person name="Gwilliam R."/>
            <person name="Rajandream M.A."/>
            <person name="Lyne M.H."/>
            <person name="Lyne R."/>
            <person name="Stewart A."/>
            <person name="Sgouros J.G."/>
            <person name="Peat N."/>
            <person name="Hayles J."/>
            <person name="Baker S.G."/>
            <person name="Basham D."/>
            <person name="Bowman S."/>
            <person name="Brooks K."/>
            <person name="Brown D."/>
            <person name="Brown S."/>
            <person name="Chillingworth T."/>
            <person name="Churcher C.M."/>
            <person name="Collins M."/>
            <person name="Connor R."/>
            <person name="Cronin A."/>
            <person name="Davis P."/>
            <person name="Feltwell T."/>
            <person name="Fraser A."/>
            <person name="Gentles S."/>
            <person name="Goble A."/>
            <person name="Hamlin N."/>
            <person name="Harris D.E."/>
            <person name="Hidalgo J."/>
            <person name="Hodgson G."/>
            <person name="Holroyd S."/>
            <person name="Hornsby T."/>
            <person name="Howarth S."/>
            <person name="Huckle E.J."/>
            <person name="Hunt S."/>
            <person name="Jagels K."/>
            <person name="James K.D."/>
            <person name="Jones L."/>
            <person name="Jones M."/>
            <person name="Leather S."/>
            <person name="McDonald S."/>
            <person name="McLean J."/>
            <person name="Mooney P."/>
            <person name="Moule S."/>
            <person name="Mungall K.L."/>
            <person name="Murphy L.D."/>
            <person name="Niblett D."/>
            <person name="Odell C."/>
            <person name="Oliver K."/>
            <person name="O'Neil S."/>
            <person name="Pearson D."/>
            <person name="Quail M.A."/>
            <person name="Rabbinowitsch E."/>
            <person name="Rutherford K.M."/>
            <person name="Rutter S."/>
            <person name="Saunders D."/>
            <person name="Seeger K."/>
            <person name="Sharp S."/>
            <person name="Skelton J."/>
            <person name="Simmonds M.N."/>
            <person name="Squares R."/>
            <person name="Squares S."/>
            <person name="Stevens K."/>
            <person name="Taylor K."/>
            <person name="Taylor R.G."/>
            <person name="Tivey A."/>
            <person name="Walsh S.V."/>
            <person name="Warren T."/>
            <person name="Whitehead S."/>
            <person name="Woodward J.R."/>
            <person name="Volckaert G."/>
            <person name="Aert R."/>
            <person name="Robben J."/>
            <person name="Grymonprez B."/>
            <person name="Weltjens I."/>
            <person name="Vanstreels E."/>
            <person name="Rieger M."/>
            <person name="Schaefer M."/>
            <person name="Mueller-Auer S."/>
            <person name="Gabel C."/>
            <person name="Fuchs M."/>
            <person name="Duesterhoeft A."/>
            <person name="Fritzc C."/>
            <person name="Holzer E."/>
            <person name="Moestl D."/>
            <person name="Hilbert H."/>
            <person name="Borzym K."/>
            <person name="Langer I."/>
            <person name="Beck A."/>
            <person name="Lehrach H."/>
            <person name="Reinhardt R."/>
            <person name="Pohl T.M."/>
            <person name="Eger P."/>
            <person name="Zimmermann W."/>
            <person name="Wedler H."/>
            <person name="Wambutt R."/>
            <person name="Purnelle B."/>
            <person name="Goffeau A."/>
            <person name="Cadieu E."/>
            <person name="Dreano S."/>
            <person name="Gloux S."/>
            <person name="Lelaure V."/>
            <person name="Mottier S."/>
            <person name="Galibert F."/>
            <person name="Aves S.J."/>
            <person name="Xiang Z."/>
            <person name="Hunt C."/>
            <person name="Moore K."/>
            <person name="Hurst S.M."/>
            <person name="Lucas M."/>
            <person name="Rochet M."/>
            <person name="Gaillardin C."/>
            <person name="Tallada V.A."/>
            <person name="Garzon A."/>
            <person name="Thode G."/>
            <person name="Daga R.R."/>
            <person name="Cruzado L."/>
            <person name="Jimenez J."/>
            <person name="Sanchez M."/>
            <person name="del Rey F."/>
            <person name="Benito J."/>
            <person name="Dominguez A."/>
            <person name="Revuelta J.L."/>
            <person name="Moreno S."/>
            <person name="Armstrong J."/>
            <person name="Forsburg S.L."/>
            <person name="Cerutti L."/>
            <person name="Lowe T."/>
            <person name="McCombie W.R."/>
            <person name="Paulsen I."/>
            <person name="Potashkin J."/>
            <person name="Shpakovski G.V."/>
            <person name="Ussery D."/>
            <person name="Barrell B.G."/>
            <person name="Nurse P."/>
        </authorList>
    </citation>
    <scope>NUCLEOTIDE SEQUENCE [LARGE SCALE GENOMIC DNA]</scope>
    <source>
        <strain>972 / ATCC 24843</strain>
    </source>
</reference>
<reference key="2">
    <citation type="journal article" date="2006" name="Nat. Biotechnol.">
        <title>ORFeome cloning and global analysis of protein localization in the fission yeast Schizosaccharomyces pombe.</title>
        <authorList>
            <person name="Matsuyama A."/>
            <person name="Arai R."/>
            <person name="Yashiroda Y."/>
            <person name="Shirai A."/>
            <person name="Kamata A."/>
            <person name="Sekido S."/>
            <person name="Kobayashi Y."/>
            <person name="Hashimoto A."/>
            <person name="Hamamoto M."/>
            <person name="Hiraoka Y."/>
            <person name="Horinouchi S."/>
            <person name="Yoshida M."/>
        </authorList>
    </citation>
    <scope>SUBCELLULAR LOCATION [LARGE SCALE ANALYSIS]</scope>
</reference>
<feature type="transit peptide" description="Mitochondrion" evidence="2">
    <location>
        <begin position="1"/>
        <end position="22"/>
    </location>
</feature>
<feature type="chain" id="PRO_0000310372" description="Large ribosomal subunit protein uL22m">
    <location>
        <begin position="23"/>
        <end position="249"/>
    </location>
</feature>
<feature type="region of interest" description="Disordered" evidence="3">
    <location>
        <begin position="70"/>
        <end position="98"/>
    </location>
</feature>
<feature type="compositionally biased region" description="Basic and acidic residues" evidence="3">
    <location>
        <begin position="72"/>
        <end position="98"/>
    </location>
</feature>
<accession>O74464</accession>
<organism>
    <name type="scientific">Schizosaccharomyces pombe (strain 972 / ATCC 24843)</name>
    <name type="common">Fission yeast</name>
    <dbReference type="NCBI Taxonomy" id="284812"/>
    <lineage>
        <taxon>Eukaryota</taxon>
        <taxon>Fungi</taxon>
        <taxon>Dikarya</taxon>
        <taxon>Ascomycota</taxon>
        <taxon>Taphrinomycotina</taxon>
        <taxon>Schizosaccharomycetes</taxon>
        <taxon>Schizosaccharomycetales</taxon>
        <taxon>Schizosaccharomycetaceae</taxon>
        <taxon>Schizosaccharomyces</taxon>
    </lineage>
</organism>
<name>RM22_SCHPO</name>
<gene>
    <name type="primary">mrpl22</name>
    <name type="ORF">SPCC1739.02c</name>
</gene>